<gene>
    <name type="ordered locus">DVU_0924</name>
</gene>
<sequence length="468" mass="51206">METFANGMTLDVTVDALAPGGKAVCRHEGRVIFVDRGLPGQQLHVRLTTVRKRFAEAECLAVVTHTADECDPFCPHFGDCGGCTWQNLPYPAQLAWKERFVRDSLQRIGRIEAPNVLPTLPSPLQQGFRNKMEFAFTTDDREMLHLGLRRRGGHEVVDVTSCGLQTATTCRVVTTARDIARASGLPGWDDAAHRGFWRFLVVREPARGGQCLVQCITAPHPEAEHVARAFFTALRQAVPEVTGCVHSIRSQNSQVAYGDATVFTEGEIVLTEKLGAIELDFGHDTFLQTNTRATELLYGEVERMAGLSGREHVWDLYCGVGSIALWLAEHAATICGMEATPASVEAAQRNAQAAGCTHCDFVAGDVRALLRSRSKGKAQEPIPDVVVTDPPRAGMHPDVIDALLQTAPARIVYVSCDPATMARDVGLLMQRYTLHEARPVDLFPHTPHVETVVLLSNKEVDDTISTTV</sequence>
<accession>Q72DK5</accession>
<reference key="1">
    <citation type="journal article" date="2004" name="Nat. Biotechnol.">
        <title>The genome sequence of the anaerobic, sulfate-reducing bacterium Desulfovibrio vulgaris Hildenborough.</title>
        <authorList>
            <person name="Heidelberg J.F."/>
            <person name="Seshadri R."/>
            <person name="Haveman S.A."/>
            <person name="Hemme C.L."/>
            <person name="Paulsen I.T."/>
            <person name="Kolonay J.F."/>
            <person name="Eisen J.A."/>
            <person name="Ward N.L."/>
            <person name="Methe B.A."/>
            <person name="Brinkac L.M."/>
            <person name="Daugherty S.C."/>
            <person name="DeBoy R.T."/>
            <person name="Dodson R.J."/>
            <person name="Durkin A.S."/>
            <person name="Madupu R."/>
            <person name="Nelson W.C."/>
            <person name="Sullivan S.A."/>
            <person name="Fouts D.E."/>
            <person name="Haft D.H."/>
            <person name="Selengut J."/>
            <person name="Peterson J.D."/>
            <person name="Davidsen T.M."/>
            <person name="Zafar N."/>
            <person name="Zhou L."/>
            <person name="Radune D."/>
            <person name="Dimitrov G."/>
            <person name="Hance M."/>
            <person name="Tran K."/>
            <person name="Khouri H.M."/>
            <person name="Gill J."/>
            <person name="Utterback T.R."/>
            <person name="Feldblyum T.V."/>
            <person name="Wall J.D."/>
            <person name="Voordouw G."/>
            <person name="Fraser C.M."/>
        </authorList>
    </citation>
    <scope>NUCLEOTIDE SEQUENCE [LARGE SCALE GENOMIC DNA]</scope>
    <source>
        <strain>ATCC 29579 / DSM 644 / CCUG 34227 / NCIMB 8303 / VKM B-1760 / Hildenborough</strain>
    </source>
</reference>
<dbReference type="EC" id="2.1.1.-"/>
<dbReference type="EMBL" id="AE017285">
    <property type="protein sequence ID" value="AAS95404.1"/>
    <property type="molecule type" value="Genomic_DNA"/>
</dbReference>
<dbReference type="RefSeq" id="WP_010938223.1">
    <property type="nucleotide sequence ID" value="NC_002937.3"/>
</dbReference>
<dbReference type="RefSeq" id="YP_010145.1">
    <property type="nucleotide sequence ID" value="NC_002937.3"/>
</dbReference>
<dbReference type="SMR" id="Q72DK5"/>
<dbReference type="IntAct" id="Q72DK5">
    <property type="interactions" value="1"/>
</dbReference>
<dbReference type="STRING" id="882.DVU_0924"/>
<dbReference type="PaxDb" id="882-DVU_0924"/>
<dbReference type="EnsemblBacteria" id="AAS95404">
    <property type="protein sequence ID" value="AAS95404"/>
    <property type="gene ID" value="DVU_0924"/>
</dbReference>
<dbReference type="KEGG" id="dvu:DVU_0924"/>
<dbReference type="PATRIC" id="fig|882.5.peg.868"/>
<dbReference type="eggNOG" id="COG2265">
    <property type="taxonomic scope" value="Bacteria"/>
</dbReference>
<dbReference type="HOGENOM" id="CLU_014689_7_2_7"/>
<dbReference type="OrthoDB" id="9804590at2"/>
<dbReference type="PhylomeDB" id="Q72DK5"/>
<dbReference type="Proteomes" id="UP000002194">
    <property type="component" value="Chromosome"/>
</dbReference>
<dbReference type="GO" id="GO:0051539">
    <property type="term" value="F:4 iron, 4 sulfur cluster binding"/>
    <property type="evidence" value="ECO:0007669"/>
    <property type="project" value="UniProtKB-KW"/>
</dbReference>
<dbReference type="GO" id="GO:0046872">
    <property type="term" value="F:metal ion binding"/>
    <property type="evidence" value="ECO:0007669"/>
    <property type="project" value="UniProtKB-KW"/>
</dbReference>
<dbReference type="GO" id="GO:0008173">
    <property type="term" value="F:RNA methyltransferase activity"/>
    <property type="evidence" value="ECO:0007669"/>
    <property type="project" value="InterPro"/>
</dbReference>
<dbReference type="GO" id="GO:0008757">
    <property type="term" value="F:S-adenosylmethionine-dependent methyltransferase activity"/>
    <property type="evidence" value="ECO:0007669"/>
    <property type="project" value="UniProtKB-ARBA"/>
</dbReference>
<dbReference type="GO" id="GO:0032259">
    <property type="term" value="P:methylation"/>
    <property type="evidence" value="ECO:0007669"/>
    <property type="project" value="UniProtKB-KW"/>
</dbReference>
<dbReference type="GO" id="GO:0009451">
    <property type="term" value="P:RNA modification"/>
    <property type="evidence" value="ECO:0007669"/>
    <property type="project" value="UniProtKB-ARBA"/>
</dbReference>
<dbReference type="GO" id="GO:0006396">
    <property type="term" value="P:RNA processing"/>
    <property type="evidence" value="ECO:0007669"/>
    <property type="project" value="InterPro"/>
</dbReference>
<dbReference type="CDD" id="cd02440">
    <property type="entry name" value="AdoMet_MTases"/>
    <property type="match status" value="1"/>
</dbReference>
<dbReference type="FunFam" id="3.40.50.150:FF:000009">
    <property type="entry name" value="23S rRNA (Uracil(1939)-C(5))-methyltransferase RlmD"/>
    <property type="match status" value="1"/>
</dbReference>
<dbReference type="Gene3D" id="2.40.50.1070">
    <property type="match status" value="1"/>
</dbReference>
<dbReference type="Gene3D" id="2.40.50.140">
    <property type="entry name" value="Nucleic acid-binding proteins"/>
    <property type="match status" value="1"/>
</dbReference>
<dbReference type="Gene3D" id="3.40.50.150">
    <property type="entry name" value="Vaccinia Virus protein VP39"/>
    <property type="match status" value="1"/>
</dbReference>
<dbReference type="InterPro" id="IPR030390">
    <property type="entry name" value="MeTrfase_TrmA_AS"/>
</dbReference>
<dbReference type="InterPro" id="IPR030391">
    <property type="entry name" value="MeTrfase_TrmA_CS"/>
</dbReference>
<dbReference type="InterPro" id="IPR012340">
    <property type="entry name" value="NA-bd_OB-fold"/>
</dbReference>
<dbReference type="InterPro" id="IPR029063">
    <property type="entry name" value="SAM-dependent_MTases_sf"/>
</dbReference>
<dbReference type="InterPro" id="IPR002792">
    <property type="entry name" value="TRAM_dom"/>
</dbReference>
<dbReference type="InterPro" id="IPR010280">
    <property type="entry name" value="U5_MeTrfase_fam"/>
</dbReference>
<dbReference type="NCBIfam" id="TIGR00479">
    <property type="entry name" value="rumA"/>
    <property type="match status" value="1"/>
</dbReference>
<dbReference type="PANTHER" id="PTHR11061">
    <property type="entry name" value="RNA M5U METHYLTRANSFERASE"/>
    <property type="match status" value="1"/>
</dbReference>
<dbReference type="PANTHER" id="PTHR11061:SF30">
    <property type="entry name" value="TRNA (URACIL(54)-C(5))-METHYLTRANSFERASE"/>
    <property type="match status" value="1"/>
</dbReference>
<dbReference type="Pfam" id="PF01938">
    <property type="entry name" value="TRAM"/>
    <property type="match status" value="1"/>
</dbReference>
<dbReference type="Pfam" id="PF05958">
    <property type="entry name" value="tRNA_U5-meth_tr"/>
    <property type="match status" value="1"/>
</dbReference>
<dbReference type="SUPFAM" id="SSF50249">
    <property type="entry name" value="Nucleic acid-binding proteins"/>
    <property type="match status" value="1"/>
</dbReference>
<dbReference type="SUPFAM" id="SSF53335">
    <property type="entry name" value="S-adenosyl-L-methionine-dependent methyltransferases"/>
    <property type="match status" value="1"/>
</dbReference>
<dbReference type="PROSITE" id="PS51687">
    <property type="entry name" value="SAM_MT_RNA_M5U"/>
    <property type="match status" value="1"/>
</dbReference>
<dbReference type="PROSITE" id="PS50926">
    <property type="entry name" value="TRAM"/>
    <property type="match status" value="1"/>
</dbReference>
<dbReference type="PROSITE" id="PS01230">
    <property type="entry name" value="TRMA_1"/>
    <property type="match status" value="1"/>
</dbReference>
<dbReference type="PROSITE" id="PS01231">
    <property type="entry name" value="TRMA_2"/>
    <property type="match status" value="1"/>
</dbReference>
<keyword id="KW-0004">4Fe-4S</keyword>
<keyword id="KW-0408">Iron</keyword>
<keyword id="KW-0411">Iron-sulfur</keyword>
<keyword id="KW-0479">Metal-binding</keyword>
<keyword id="KW-0489">Methyltransferase</keyword>
<keyword id="KW-1185">Reference proteome</keyword>
<keyword id="KW-0949">S-adenosyl-L-methionine</keyword>
<keyword id="KW-0808">Transferase</keyword>
<comment type="similarity">
    <text evidence="3">Belongs to the class I-like SAM-binding methyltransferase superfamily. RNA M5U methyltransferase family.</text>
</comment>
<feature type="chain" id="PRO_0000161977" description="Uncharacterized RNA methyltransferase DVU_0924">
    <location>
        <begin position="1"/>
        <end position="468"/>
    </location>
</feature>
<feature type="domain" description="TRAM" evidence="2">
    <location>
        <begin position="3"/>
        <end position="61"/>
    </location>
</feature>
<feature type="active site" description="Nucleophile" evidence="3">
    <location>
        <position position="416"/>
    </location>
</feature>
<feature type="binding site" evidence="1">
    <location>
        <position position="74"/>
    </location>
    <ligand>
        <name>[4Fe-4S] cluster</name>
        <dbReference type="ChEBI" id="CHEBI:49883"/>
    </ligand>
</feature>
<feature type="binding site" evidence="1">
    <location>
        <position position="80"/>
    </location>
    <ligand>
        <name>[4Fe-4S] cluster</name>
        <dbReference type="ChEBI" id="CHEBI:49883"/>
    </ligand>
</feature>
<feature type="binding site" evidence="1">
    <location>
        <position position="83"/>
    </location>
    <ligand>
        <name>[4Fe-4S] cluster</name>
        <dbReference type="ChEBI" id="CHEBI:49883"/>
    </ligand>
</feature>
<feature type="binding site" evidence="1">
    <location>
        <position position="162"/>
    </location>
    <ligand>
        <name>[4Fe-4S] cluster</name>
        <dbReference type="ChEBI" id="CHEBI:49883"/>
    </ligand>
</feature>
<feature type="binding site" evidence="3">
    <location>
        <position position="288"/>
    </location>
    <ligand>
        <name>S-adenosyl-L-methionine</name>
        <dbReference type="ChEBI" id="CHEBI:59789"/>
    </ligand>
</feature>
<feature type="binding site" evidence="3">
    <location>
        <position position="317"/>
    </location>
    <ligand>
        <name>S-adenosyl-L-methionine</name>
        <dbReference type="ChEBI" id="CHEBI:59789"/>
    </ligand>
</feature>
<feature type="binding site" evidence="3">
    <location>
        <position position="338"/>
    </location>
    <ligand>
        <name>S-adenosyl-L-methionine</name>
        <dbReference type="ChEBI" id="CHEBI:59789"/>
    </ligand>
</feature>
<feature type="binding site" evidence="3">
    <location>
        <position position="389"/>
    </location>
    <ligand>
        <name>S-adenosyl-L-methionine</name>
        <dbReference type="ChEBI" id="CHEBI:59789"/>
    </ligand>
</feature>
<organism>
    <name type="scientific">Nitratidesulfovibrio vulgaris (strain ATCC 29579 / DSM 644 / CCUG 34227 / NCIMB 8303 / VKM B-1760 / Hildenborough)</name>
    <name type="common">Desulfovibrio vulgaris</name>
    <dbReference type="NCBI Taxonomy" id="882"/>
    <lineage>
        <taxon>Bacteria</taxon>
        <taxon>Pseudomonadati</taxon>
        <taxon>Thermodesulfobacteriota</taxon>
        <taxon>Desulfovibrionia</taxon>
        <taxon>Desulfovibrionales</taxon>
        <taxon>Desulfovibrionaceae</taxon>
        <taxon>Nitratidesulfovibrio</taxon>
    </lineage>
</organism>
<evidence type="ECO:0000250" key="1"/>
<evidence type="ECO:0000255" key="2">
    <source>
        <dbReference type="PROSITE-ProRule" id="PRU00208"/>
    </source>
</evidence>
<evidence type="ECO:0000255" key="3">
    <source>
        <dbReference type="PROSITE-ProRule" id="PRU01024"/>
    </source>
</evidence>
<protein>
    <recommendedName>
        <fullName>Uncharacterized RNA methyltransferase DVU_0924</fullName>
        <ecNumber>2.1.1.-</ecNumber>
    </recommendedName>
</protein>
<name>Y924_NITV2</name>
<proteinExistence type="inferred from homology"/>